<dbReference type="EMBL" id="X13254">
    <property type="protein sequence ID" value="CAA31630.1"/>
    <property type="molecule type" value="mRNA"/>
</dbReference>
<dbReference type="EMBL" id="X06320">
    <property type="protein sequence ID" value="CAA29635.1"/>
    <property type="molecule type" value="Genomic_DNA"/>
</dbReference>
<dbReference type="EMBL" id="AL451018">
    <property type="protein sequence ID" value="CAC18245.1"/>
    <property type="molecule type" value="Genomic_DNA"/>
</dbReference>
<dbReference type="EMBL" id="CM002240">
    <property type="protein sequence ID" value="EAA31959.2"/>
    <property type="molecule type" value="Genomic_DNA"/>
</dbReference>
<dbReference type="PIR" id="S01744">
    <property type="entry name" value="R6NC7A"/>
</dbReference>
<dbReference type="RefSeq" id="XP_961195.2">
    <property type="nucleotide sequence ID" value="XM_956102.3"/>
</dbReference>
<dbReference type="PDB" id="7R81">
    <property type="method" value="EM"/>
    <property type="resolution" value="2.70 A"/>
    <property type="chains" value="c1=1-149"/>
</dbReference>
<dbReference type="PDBsum" id="7R81"/>
<dbReference type="EMDB" id="EMD-24307"/>
<dbReference type="SMR" id="P08978"/>
<dbReference type="FunCoup" id="P08978">
    <property type="interactions" value="956"/>
</dbReference>
<dbReference type="STRING" id="367110.P08978"/>
<dbReference type="PaxDb" id="5141-EFNCRP00000003515"/>
<dbReference type="EnsemblFungi" id="EAA31959">
    <property type="protein sequence ID" value="EAA31959"/>
    <property type="gene ID" value="NCU03806"/>
</dbReference>
<dbReference type="GeneID" id="3877355"/>
<dbReference type="KEGG" id="ncr:NCU03806"/>
<dbReference type="VEuPathDB" id="FungiDB:NCU03806"/>
<dbReference type="HOGENOM" id="CLU_109163_1_0_1"/>
<dbReference type="InParanoid" id="P08978"/>
<dbReference type="OMA" id="WGRVGQH"/>
<dbReference type="OrthoDB" id="61900at2759"/>
<dbReference type="Proteomes" id="UP000001805">
    <property type="component" value="Chromosome 2, Linkage Group V"/>
</dbReference>
<dbReference type="GO" id="GO:0022625">
    <property type="term" value="C:cytosolic large ribosomal subunit"/>
    <property type="evidence" value="ECO:0000318"/>
    <property type="project" value="GO_Central"/>
</dbReference>
<dbReference type="GO" id="GO:0005634">
    <property type="term" value="C:nucleus"/>
    <property type="evidence" value="ECO:0007669"/>
    <property type="project" value="EnsemblFungi"/>
</dbReference>
<dbReference type="GO" id="GO:0003723">
    <property type="term" value="F:RNA binding"/>
    <property type="evidence" value="ECO:0007669"/>
    <property type="project" value="EnsemblFungi"/>
</dbReference>
<dbReference type="GO" id="GO:0003735">
    <property type="term" value="F:structural constituent of ribosome"/>
    <property type="evidence" value="ECO:0000318"/>
    <property type="project" value="GO_Central"/>
</dbReference>
<dbReference type="GO" id="GO:0006412">
    <property type="term" value="P:translation"/>
    <property type="evidence" value="ECO:0007669"/>
    <property type="project" value="InterPro"/>
</dbReference>
<dbReference type="FunFam" id="3.100.10.10:FF:000002">
    <property type="entry name" value="60S ribosomal protein L27a"/>
    <property type="match status" value="1"/>
</dbReference>
<dbReference type="Gene3D" id="3.100.10.10">
    <property type="match status" value="1"/>
</dbReference>
<dbReference type="HAMAP" id="MF_01341">
    <property type="entry name" value="Ribosomal_uL15"/>
    <property type="match status" value="1"/>
</dbReference>
<dbReference type="InterPro" id="IPR030878">
    <property type="entry name" value="Ribosomal_uL15"/>
</dbReference>
<dbReference type="InterPro" id="IPR021131">
    <property type="entry name" value="Ribosomal_uL15/eL18"/>
</dbReference>
<dbReference type="InterPro" id="IPR036227">
    <property type="entry name" value="Ribosomal_uL15/eL18_sf"/>
</dbReference>
<dbReference type="InterPro" id="IPR001196">
    <property type="entry name" value="Ribosomal_uL15_CS"/>
</dbReference>
<dbReference type="PANTHER" id="PTHR11721">
    <property type="entry name" value="60S RIBOSOMAL PROTEIN L27A"/>
    <property type="match status" value="1"/>
</dbReference>
<dbReference type="PANTHER" id="PTHR11721:SF3">
    <property type="entry name" value="LARGE RIBOSOMAL SUBUNIT PROTEIN UL15"/>
    <property type="match status" value="1"/>
</dbReference>
<dbReference type="Pfam" id="PF00828">
    <property type="entry name" value="Ribosomal_L27A"/>
    <property type="match status" value="1"/>
</dbReference>
<dbReference type="SUPFAM" id="SSF52080">
    <property type="entry name" value="Ribosomal proteins L15p and L18e"/>
    <property type="match status" value="1"/>
</dbReference>
<dbReference type="PROSITE" id="PS00475">
    <property type="entry name" value="RIBOSOMAL_L15"/>
    <property type="match status" value="1"/>
</dbReference>
<sequence length="149" mass="16597">MPTRFSKTRKHRGHVSAGKGRVGKHRKHPGGRGMAGGQHHHRTNLDKYHPGYFGKVGMRHFHLLRNHQWAPILNIEKLWTLVPAEAREKYVSGAATETAPVIDLLSHGYAKLLGKGRLPQVPIVVRARYVSAEAERKIKEAGGVIELVA</sequence>
<accession>P08978</accession>
<accession>Q7S7S1</accession>
<organism>
    <name type="scientific">Neurospora crassa (strain ATCC 24698 / 74-OR23-1A / CBS 708.71 / DSM 1257 / FGSC 987)</name>
    <dbReference type="NCBI Taxonomy" id="367110"/>
    <lineage>
        <taxon>Eukaryota</taxon>
        <taxon>Fungi</taxon>
        <taxon>Dikarya</taxon>
        <taxon>Ascomycota</taxon>
        <taxon>Pezizomycotina</taxon>
        <taxon>Sordariomycetes</taxon>
        <taxon>Sordariomycetidae</taxon>
        <taxon>Sordariales</taxon>
        <taxon>Sordariaceae</taxon>
        <taxon>Neurospora</taxon>
    </lineage>
</organism>
<evidence type="ECO:0000256" key="1">
    <source>
        <dbReference type="SAM" id="MobiDB-lite"/>
    </source>
</evidence>
<evidence type="ECO:0000269" key="2">
    <source>
    </source>
</evidence>
<evidence type="ECO:0000303" key="3">
    <source>
    </source>
</evidence>
<evidence type="ECO:0000305" key="4"/>
<evidence type="ECO:0000305" key="5">
    <source>
    </source>
</evidence>
<evidence type="ECO:0007744" key="6">
    <source>
        <dbReference type="PDB" id="7R81"/>
    </source>
</evidence>
<gene>
    <name type="primary">rpl-28</name>
    <name type="synonym">crp-1</name>
    <name type="ORF">99H12.90</name>
    <name type="ORF">NCU03806</name>
</gene>
<feature type="chain" id="PRO_0000104900" description="Large ribosomal subunit protein uL15">
    <location>
        <begin position="1"/>
        <end position="149"/>
    </location>
</feature>
<feature type="region of interest" description="Disordered" evidence="1">
    <location>
        <begin position="1"/>
        <end position="43"/>
    </location>
</feature>
<feature type="compositionally biased region" description="Basic residues" evidence="1">
    <location>
        <begin position="1"/>
        <end position="14"/>
    </location>
</feature>
<feature type="compositionally biased region" description="Basic residues" evidence="1">
    <location>
        <begin position="21"/>
        <end position="30"/>
    </location>
</feature>
<proteinExistence type="evidence at protein level"/>
<reference key="1">
    <citation type="journal article" date="1987" name="Nucleic Acids Res.">
        <title>Isolation and characterization of a Neurospora crassa ribosomal protein gene homologous to CYH2 of yeast.</title>
        <authorList>
            <person name="Kreader C.A."/>
            <person name="Heckman J.E."/>
        </authorList>
    </citation>
    <scope>NUCLEOTIDE SEQUENCE [GENOMIC DNA / MRNA]</scope>
</reference>
<reference key="2">
    <citation type="journal article" date="2003" name="Nucleic Acids Res.">
        <title>What's in the genome of a filamentous fungus? Analysis of the Neurospora genome sequence.</title>
        <authorList>
            <person name="Mannhaupt G."/>
            <person name="Montrone C."/>
            <person name="Haase D."/>
            <person name="Mewes H.-W."/>
            <person name="Aign V."/>
            <person name="Hoheisel J.D."/>
            <person name="Fartmann B."/>
            <person name="Nyakatura G."/>
            <person name="Kempken F."/>
            <person name="Maier J."/>
            <person name="Schulte U."/>
        </authorList>
    </citation>
    <scope>NUCLEOTIDE SEQUENCE [LARGE SCALE GENOMIC DNA]</scope>
    <source>
        <strain>ATCC 24698 / 74-OR23-1A / CBS 708.71 / DSM 1257 / FGSC 987</strain>
    </source>
</reference>
<reference key="3">
    <citation type="journal article" date="2003" name="Nature">
        <title>The genome sequence of the filamentous fungus Neurospora crassa.</title>
        <authorList>
            <person name="Galagan J.E."/>
            <person name="Calvo S.E."/>
            <person name="Borkovich K.A."/>
            <person name="Selker E.U."/>
            <person name="Read N.D."/>
            <person name="Jaffe D.B."/>
            <person name="FitzHugh W."/>
            <person name="Ma L.-J."/>
            <person name="Smirnov S."/>
            <person name="Purcell S."/>
            <person name="Rehman B."/>
            <person name="Elkins T."/>
            <person name="Engels R."/>
            <person name="Wang S."/>
            <person name="Nielsen C.B."/>
            <person name="Butler J."/>
            <person name="Endrizzi M."/>
            <person name="Qui D."/>
            <person name="Ianakiev P."/>
            <person name="Bell-Pedersen D."/>
            <person name="Nelson M.A."/>
            <person name="Werner-Washburne M."/>
            <person name="Selitrennikoff C.P."/>
            <person name="Kinsey J.A."/>
            <person name="Braun E.L."/>
            <person name="Zelter A."/>
            <person name="Schulte U."/>
            <person name="Kothe G.O."/>
            <person name="Jedd G."/>
            <person name="Mewes H.-W."/>
            <person name="Staben C."/>
            <person name="Marcotte E."/>
            <person name="Greenberg D."/>
            <person name="Roy A."/>
            <person name="Foley K."/>
            <person name="Naylor J."/>
            <person name="Stange-Thomann N."/>
            <person name="Barrett R."/>
            <person name="Gnerre S."/>
            <person name="Kamal M."/>
            <person name="Kamvysselis M."/>
            <person name="Mauceli E.W."/>
            <person name="Bielke C."/>
            <person name="Rudd S."/>
            <person name="Frishman D."/>
            <person name="Krystofova S."/>
            <person name="Rasmussen C."/>
            <person name="Metzenberg R.L."/>
            <person name="Perkins D.D."/>
            <person name="Kroken S."/>
            <person name="Cogoni C."/>
            <person name="Macino G."/>
            <person name="Catcheside D.E.A."/>
            <person name="Li W."/>
            <person name="Pratt R.J."/>
            <person name="Osmani S.A."/>
            <person name="DeSouza C.P.C."/>
            <person name="Glass N.L."/>
            <person name="Orbach M.J."/>
            <person name="Berglund J.A."/>
            <person name="Voelker R."/>
            <person name="Yarden O."/>
            <person name="Plamann M."/>
            <person name="Seiler S."/>
            <person name="Dunlap J.C."/>
            <person name="Radford A."/>
            <person name="Aramayo R."/>
            <person name="Natvig D.O."/>
            <person name="Alex L.A."/>
            <person name="Mannhaupt G."/>
            <person name="Ebbole D.J."/>
            <person name="Freitag M."/>
            <person name="Paulsen I."/>
            <person name="Sachs M.S."/>
            <person name="Lander E.S."/>
            <person name="Nusbaum C."/>
            <person name="Birren B.W."/>
        </authorList>
    </citation>
    <scope>NUCLEOTIDE SEQUENCE [LARGE SCALE GENOMIC DNA]</scope>
    <source>
        <strain>ATCC 24698 / 74-OR23-1A / CBS 708.71 / DSM 1257 / FGSC 987</strain>
    </source>
</reference>
<reference evidence="6" key="4">
    <citation type="journal article" date="2021" name="Proc. Natl. Acad. Sci. U.S.A.">
        <title>Structure of the translating Neurospora ribosome arrested by cycloheximide.</title>
        <authorList>
            <person name="Shen L."/>
            <person name="Su Z."/>
            <person name="Yang K."/>
            <person name="Wu C."/>
            <person name="Becker T."/>
            <person name="Bell-Pedersen D."/>
            <person name="Zhang J."/>
            <person name="Sachs M.S."/>
        </authorList>
    </citation>
    <scope>STRUCTURE BY ELECTRON MICROSCOPY (2.70 ANGSTROMS)</scope>
</reference>
<protein>
    <recommendedName>
        <fullName evidence="3">Large ribosomal subunit protein uL15</fullName>
    </recommendedName>
    <alternativeName>
        <fullName>60S ribosomal protein L28</fullName>
    </alternativeName>
    <alternativeName>
        <fullName>CRP1</fullName>
    </alternativeName>
    <alternativeName>
        <fullName>L27A</fullName>
    </alternativeName>
    <alternativeName>
        <fullName>L29</fullName>
    </alternativeName>
</protein>
<comment type="function">
    <text evidence="5">Component of the ribosome, a large ribonucleoprotein complex responsible for the synthesis of proteins in the cell. The small ribosomal subunit (SSU) binds messenger RNAs (mRNAs) and translates the encoded message by selecting cognate aminoacyl-transfer RNA (tRNA) molecules. The large subunit (LSU) contains the ribosomal catalytic site termed the peptidyl transferase center (PTC), which catalyzes the formation of peptide bonds, thereby polymerizing the amino acids delivered by tRNAs into a polypeptide chain. The nascent polypeptides leave the ribosome through a tunnel in the LSU and interact with protein factors that function in enzymatic processing, targeting, and the membrane insertion of nascent chains at the exit of the ribosomal tunnel.</text>
</comment>
<comment type="subunit">
    <text evidence="2">Component of the large ribosomal subunit (LSU). Mature N.crassa ribosomes consist of a small (40S) and a large (60S) subunit. The 40S small subunit contains 1 molecule of ribosomal RNA (18S rRNA) and at least 32 different proteins. The large 60S subunit contains 3 rRNA molecules (26S, 5.8S and 5S rRNA) and at least 42 different proteins.</text>
</comment>
<comment type="subcellular location">
    <subcellularLocation>
        <location evidence="2">Cytoplasm</location>
    </subcellularLocation>
</comment>
<comment type="similarity">
    <text evidence="4">Belongs to the universal ribosomal protein uL15 family.</text>
</comment>
<name>RL28A_NEUCR</name>
<keyword id="KW-0002">3D-structure</keyword>
<keyword id="KW-0963">Cytoplasm</keyword>
<keyword id="KW-1185">Reference proteome</keyword>
<keyword id="KW-0687">Ribonucleoprotein</keyword>
<keyword id="KW-0689">Ribosomal protein</keyword>